<sequence length="318" mass="34613">MSTRELIVLGTSSAVPTKRRAHNGYFLRWDGHGILFDPGEGTQRQMRYAGISAHDITRVCVTHFHGDHSLGLPGVIQRIARDGVTHPVRVAYPAAGQEYWERLRYATSFVDTEVIEAQPLAGDEVVVSGEDEFTVTALPLDHSIPTYGYRIAEPDRVHMLADRLAARGIRGPAVGRLKAEGFLIDAAGNRVELADYSVVRPGQVFAFVMDTGVCDTAVRLAERADLLVIEATFLNAEAELAARYRHLTAGQAGMIAAQAGVRRLVLTHFSERYGREEEDRFIAEAAACFSGEIVLAQDVMRVAVPSRRSEGGGTVAGA</sequence>
<protein>
    <recommendedName>
        <fullName evidence="1">Ribonuclease Z</fullName>
        <shortName evidence="1">RNase Z</shortName>
        <ecNumber evidence="1">3.1.26.11</ecNumber>
    </recommendedName>
    <alternativeName>
        <fullName evidence="1">tRNA 3 endonuclease</fullName>
    </alternativeName>
    <alternativeName>
        <fullName evidence="1">tRNase Z</fullName>
    </alternativeName>
</protein>
<reference key="1">
    <citation type="journal article" date="2007" name="J. Bacteriol.">
        <title>Genome sequence and analysis of the soil cellulolytic actinomycete Thermobifida fusca YX.</title>
        <authorList>
            <person name="Lykidis A."/>
            <person name="Mavromatis K."/>
            <person name="Ivanova N."/>
            <person name="Anderson I."/>
            <person name="Land M."/>
            <person name="DiBartolo G."/>
            <person name="Martinez M."/>
            <person name="Lapidus A."/>
            <person name="Lucas S."/>
            <person name="Copeland A."/>
            <person name="Richardson P."/>
            <person name="Wilson D.B."/>
            <person name="Kyrpides N."/>
        </authorList>
    </citation>
    <scope>NUCLEOTIDE SEQUENCE [LARGE SCALE GENOMIC DNA]</scope>
    <source>
        <strain>YX</strain>
    </source>
</reference>
<comment type="function">
    <text evidence="1">Zinc phosphodiesterase, which displays some tRNA 3'-processing endonuclease activity. Probably involved in tRNA maturation, by removing a 3'-trailer from precursor tRNA.</text>
</comment>
<comment type="catalytic activity">
    <reaction evidence="1">
        <text>Endonucleolytic cleavage of RNA, removing extra 3' nucleotides from tRNA precursor, generating 3' termini of tRNAs. A 3'-hydroxy group is left at the tRNA terminus and a 5'-phosphoryl group is left at the trailer molecule.</text>
        <dbReference type="EC" id="3.1.26.11"/>
    </reaction>
</comment>
<comment type="cofactor">
    <cofactor evidence="1">
        <name>Zn(2+)</name>
        <dbReference type="ChEBI" id="CHEBI:29105"/>
    </cofactor>
    <text evidence="1">Binds 2 Zn(2+) ions.</text>
</comment>
<comment type="subunit">
    <text evidence="1">Homodimer.</text>
</comment>
<comment type="similarity">
    <text evidence="1">Belongs to the RNase Z family.</text>
</comment>
<proteinExistence type="inferred from homology"/>
<dbReference type="EC" id="3.1.26.11" evidence="1"/>
<dbReference type="EMBL" id="CP000088">
    <property type="protein sequence ID" value="AAZ55562.1"/>
    <property type="molecule type" value="Genomic_DNA"/>
</dbReference>
<dbReference type="RefSeq" id="WP_011291957.1">
    <property type="nucleotide sequence ID" value="NC_007333.1"/>
</dbReference>
<dbReference type="SMR" id="Q47PQ7"/>
<dbReference type="STRING" id="269800.Tfu_1526"/>
<dbReference type="KEGG" id="tfu:Tfu_1526"/>
<dbReference type="eggNOG" id="COG1234">
    <property type="taxonomic scope" value="Bacteria"/>
</dbReference>
<dbReference type="HOGENOM" id="CLU_031317_2_1_11"/>
<dbReference type="OrthoDB" id="9800940at2"/>
<dbReference type="GO" id="GO:0042781">
    <property type="term" value="F:3'-tRNA processing endoribonuclease activity"/>
    <property type="evidence" value="ECO:0007669"/>
    <property type="project" value="UniProtKB-UniRule"/>
</dbReference>
<dbReference type="GO" id="GO:0008270">
    <property type="term" value="F:zinc ion binding"/>
    <property type="evidence" value="ECO:0007669"/>
    <property type="project" value="UniProtKB-UniRule"/>
</dbReference>
<dbReference type="CDD" id="cd07717">
    <property type="entry name" value="RNaseZ_ZiPD-like_MBL-fold"/>
    <property type="match status" value="1"/>
</dbReference>
<dbReference type="Gene3D" id="3.60.15.10">
    <property type="entry name" value="Ribonuclease Z/Hydroxyacylglutathione hydrolase-like"/>
    <property type="match status" value="1"/>
</dbReference>
<dbReference type="HAMAP" id="MF_01818">
    <property type="entry name" value="RNase_Z_BN"/>
    <property type="match status" value="1"/>
</dbReference>
<dbReference type="InterPro" id="IPR001279">
    <property type="entry name" value="Metallo-B-lactamas"/>
</dbReference>
<dbReference type="InterPro" id="IPR036866">
    <property type="entry name" value="RibonucZ/Hydroxyglut_hydro"/>
</dbReference>
<dbReference type="InterPro" id="IPR013471">
    <property type="entry name" value="RNase_Z/BN"/>
</dbReference>
<dbReference type="NCBIfam" id="NF000805">
    <property type="entry name" value="PRK00055.2-3"/>
    <property type="match status" value="1"/>
</dbReference>
<dbReference type="PANTHER" id="PTHR46018">
    <property type="entry name" value="ZINC PHOSPHODIESTERASE ELAC PROTEIN 1"/>
    <property type="match status" value="1"/>
</dbReference>
<dbReference type="PANTHER" id="PTHR46018:SF2">
    <property type="entry name" value="ZINC PHOSPHODIESTERASE ELAC PROTEIN 1"/>
    <property type="match status" value="1"/>
</dbReference>
<dbReference type="Pfam" id="PF00753">
    <property type="entry name" value="Lactamase_B"/>
    <property type="match status" value="1"/>
</dbReference>
<dbReference type="Pfam" id="PF12706">
    <property type="entry name" value="Lactamase_B_2"/>
    <property type="match status" value="1"/>
</dbReference>
<dbReference type="SMART" id="SM00849">
    <property type="entry name" value="Lactamase_B"/>
    <property type="match status" value="1"/>
</dbReference>
<dbReference type="SUPFAM" id="SSF56281">
    <property type="entry name" value="Metallo-hydrolase/oxidoreductase"/>
    <property type="match status" value="1"/>
</dbReference>
<keyword id="KW-0255">Endonuclease</keyword>
<keyword id="KW-0378">Hydrolase</keyword>
<keyword id="KW-0479">Metal-binding</keyword>
<keyword id="KW-0540">Nuclease</keyword>
<keyword id="KW-0819">tRNA processing</keyword>
<keyword id="KW-0862">Zinc</keyword>
<organism>
    <name type="scientific">Thermobifida fusca (strain YX)</name>
    <dbReference type="NCBI Taxonomy" id="269800"/>
    <lineage>
        <taxon>Bacteria</taxon>
        <taxon>Bacillati</taxon>
        <taxon>Actinomycetota</taxon>
        <taxon>Actinomycetes</taxon>
        <taxon>Streptosporangiales</taxon>
        <taxon>Nocardiopsidaceae</taxon>
        <taxon>Thermobifida</taxon>
    </lineage>
</organism>
<name>RNZ_THEFY</name>
<accession>Q47PQ7</accession>
<evidence type="ECO:0000255" key="1">
    <source>
        <dbReference type="HAMAP-Rule" id="MF_01818"/>
    </source>
</evidence>
<feature type="chain" id="PRO_1000070349" description="Ribonuclease Z">
    <location>
        <begin position="1"/>
        <end position="318"/>
    </location>
</feature>
<feature type="active site" description="Proton acceptor" evidence="1">
    <location>
        <position position="67"/>
    </location>
</feature>
<feature type="binding site" evidence="1">
    <location>
        <position position="63"/>
    </location>
    <ligand>
        <name>Zn(2+)</name>
        <dbReference type="ChEBI" id="CHEBI:29105"/>
        <label>1</label>
        <note>catalytic</note>
    </ligand>
</feature>
<feature type="binding site" evidence="1">
    <location>
        <position position="65"/>
    </location>
    <ligand>
        <name>Zn(2+)</name>
        <dbReference type="ChEBI" id="CHEBI:29105"/>
        <label>1</label>
        <note>catalytic</note>
    </ligand>
</feature>
<feature type="binding site" evidence="1">
    <location>
        <position position="67"/>
    </location>
    <ligand>
        <name>Zn(2+)</name>
        <dbReference type="ChEBI" id="CHEBI:29105"/>
        <label>2</label>
        <note>catalytic</note>
    </ligand>
</feature>
<feature type="binding site" evidence="1">
    <location>
        <position position="68"/>
    </location>
    <ligand>
        <name>Zn(2+)</name>
        <dbReference type="ChEBI" id="CHEBI:29105"/>
        <label>2</label>
        <note>catalytic</note>
    </ligand>
</feature>
<feature type="binding site" evidence="1">
    <location>
        <position position="142"/>
    </location>
    <ligand>
        <name>Zn(2+)</name>
        <dbReference type="ChEBI" id="CHEBI:29105"/>
        <label>1</label>
        <note>catalytic</note>
    </ligand>
</feature>
<feature type="binding site" evidence="1">
    <location>
        <position position="210"/>
    </location>
    <ligand>
        <name>Zn(2+)</name>
        <dbReference type="ChEBI" id="CHEBI:29105"/>
        <label>1</label>
        <note>catalytic</note>
    </ligand>
</feature>
<feature type="binding site" evidence="1">
    <location>
        <position position="210"/>
    </location>
    <ligand>
        <name>Zn(2+)</name>
        <dbReference type="ChEBI" id="CHEBI:29105"/>
        <label>2</label>
        <note>catalytic</note>
    </ligand>
</feature>
<feature type="binding site" evidence="1">
    <location>
        <position position="268"/>
    </location>
    <ligand>
        <name>Zn(2+)</name>
        <dbReference type="ChEBI" id="CHEBI:29105"/>
        <label>2</label>
        <note>catalytic</note>
    </ligand>
</feature>
<gene>
    <name evidence="1" type="primary">rnz</name>
    <name type="ordered locus">Tfu_1526</name>
</gene>